<gene>
    <name type="primary">dgdR</name>
</gene>
<protein>
    <recommendedName>
        <fullName>HTH-type transcriptional regulator DgdR</fullName>
    </recommendedName>
    <alternativeName>
        <fullName>2,2-dialkylglycine decarboxylase repressor</fullName>
    </alternativeName>
</protein>
<comment type="similarity">
    <text evidence="2">Belongs to the LysR transcriptional regulatory family.</text>
</comment>
<proteinExistence type="inferred from homology"/>
<reference key="1">
    <citation type="journal article" date="1990" name="J. Biol. Chem.">
        <title>Pseudomonas cepacia 2,2-dialkylglycine decarboxylase. Sequence and expression in Escherichia coli of structural and repressor genes.</title>
        <authorList>
            <person name="Keller J.W."/>
            <person name="Baurick K.B."/>
            <person name="Rutt G.C."/>
            <person name="O'Malley M.V."/>
            <person name="Sonafrank N.L."/>
            <person name="Reynolds R.A."/>
            <person name="Ebbesson L.O.E."/>
            <person name="Vajdos F.F."/>
        </authorList>
    </citation>
    <scope>NUCLEOTIDE SEQUENCE [GENOMIC DNA]</scope>
</reference>
<reference key="2">
    <citation type="submission" date="2002-11" db="EMBL/GenBank/DDBJ databases">
        <authorList>
            <person name="Keller J.W."/>
        </authorList>
    </citation>
    <scope>SEQUENCE REVISION</scope>
</reference>
<dbReference type="EMBL" id="J05282">
    <property type="protein sequence ID" value="AAA50843.2"/>
    <property type="molecule type" value="Genomic_DNA"/>
</dbReference>
<dbReference type="PIR" id="B35173">
    <property type="entry name" value="B35173"/>
</dbReference>
<dbReference type="SMR" id="P16931"/>
<dbReference type="STRING" id="292.WI67_29055"/>
<dbReference type="eggNOG" id="COG0583">
    <property type="taxonomic scope" value="Bacteria"/>
</dbReference>
<dbReference type="GO" id="GO:0003677">
    <property type="term" value="F:DNA binding"/>
    <property type="evidence" value="ECO:0007669"/>
    <property type="project" value="UniProtKB-KW"/>
</dbReference>
<dbReference type="GO" id="GO:0003700">
    <property type="term" value="F:DNA-binding transcription factor activity"/>
    <property type="evidence" value="ECO:0007669"/>
    <property type="project" value="InterPro"/>
</dbReference>
<dbReference type="CDD" id="cd08439">
    <property type="entry name" value="PBP2_LrhA_like"/>
    <property type="match status" value="1"/>
</dbReference>
<dbReference type="FunFam" id="1.10.10.10:FF:000001">
    <property type="entry name" value="LysR family transcriptional regulator"/>
    <property type="match status" value="1"/>
</dbReference>
<dbReference type="Gene3D" id="3.40.190.10">
    <property type="entry name" value="Periplasmic binding protein-like II"/>
    <property type="match status" value="2"/>
</dbReference>
<dbReference type="Gene3D" id="1.10.10.10">
    <property type="entry name" value="Winged helix-like DNA-binding domain superfamily/Winged helix DNA-binding domain"/>
    <property type="match status" value="1"/>
</dbReference>
<dbReference type="InterPro" id="IPR050176">
    <property type="entry name" value="LTTR"/>
</dbReference>
<dbReference type="InterPro" id="IPR005119">
    <property type="entry name" value="LysR_subst-bd"/>
</dbReference>
<dbReference type="InterPro" id="IPR000847">
    <property type="entry name" value="Tscrpt_reg_HTH_LysR"/>
</dbReference>
<dbReference type="InterPro" id="IPR036388">
    <property type="entry name" value="WH-like_DNA-bd_sf"/>
</dbReference>
<dbReference type="InterPro" id="IPR036390">
    <property type="entry name" value="WH_DNA-bd_sf"/>
</dbReference>
<dbReference type="PANTHER" id="PTHR30579:SF7">
    <property type="entry name" value="HTH-TYPE TRANSCRIPTIONAL REGULATOR LRHA-RELATED"/>
    <property type="match status" value="1"/>
</dbReference>
<dbReference type="PANTHER" id="PTHR30579">
    <property type="entry name" value="TRANSCRIPTIONAL REGULATOR"/>
    <property type="match status" value="1"/>
</dbReference>
<dbReference type="Pfam" id="PF00126">
    <property type="entry name" value="HTH_1"/>
    <property type="match status" value="1"/>
</dbReference>
<dbReference type="Pfam" id="PF03466">
    <property type="entry name" value="LysR_substrate"/>
    <property type="match status" value="1"/>
</dbReference>
<dbReference type="PRINTS" id="PR00039">
    <property type="entry name" value="HTHLYSR"/>
</dbReference>
<dbReference type="SUPFAM" id="SSF53850">
    <property type="entry name" value="Periplasmic binding protein-like II"/>
    <property type="match status" value="1"/>
</dbReference>
<dbReference type="SUPFAM" id="SSF46785">
    <property type="entry name" value="Winged helix' DNA-binding domain"/>
    <property type="match status" value="1"/>
</dbReference>
<dbReference type="PROSITE" id="PS50931">
    <property type="entry name" value="HTH_LYSR"/>
    <property type="match status" value="1"/>
</dbReference>
<accession>P16931</accession>
<feature type="chain" id="PRO_0000105620" description="HTH-type transcriptional regulator DgdR">
    <location>
        <begin position="1"/>
        <end position="294"/>
    </location>
</feature>
<feature type="domain" description="HTH lysR-type" evidence="1">
    <location>
        <begin position="14"/>
        <end position="70"/>
    </location>
</feature>
<feature type="DNA-binding region" description="H-T-H motif" evidence="1">
    <location>
        <begin position="31"/>
        <end position="50"/>
    </location>
</feature>
<name>DGDR_BURCE</name>
<sequence length="294" mass="32112">MQGRKGANTLGRSLEIDLLRSFVVIAEVRALSRAAARVGRTQSALSQQMKRLEDIVDQPLFQRTGRGVVLTHPGERLLVHAQRILRQHDEAMADLCGTGLTGTIRFGCPDDYAEVFLPPLLRQFSSQHPQAIVEIVCGPTPRLLEQLEKRAVDLAMISLPDDGANDDIIRREQLVWIGYPGLEPAHFDPLPLALSDPDTLDHIAACDALHRAGRDYRVAYASSSLAGLIALVRSGQAFAVMTQTAVPADLAIVNGDPRLPPLPAVGITLKFDRKRPSHLTAAFAEHIRAVLPML</sequence>
<evidence type="ECO:0000255" key="1">
    <source>
        <dbReference type="PROSITE-ProRule" id="PRU00253"/>
    </source>
</evidence>
<evidence type="ECO:0000305" key="2"/>
<keyword id="KW-0238">DNA-binding</keyword>
<keyword id="KW-0678">Repressor</keyword>
<keyword id="KW-0804">Transcription</keyword>
<keyword id="KW-0805">Transcription regulation</keyword>
<organism>
    <name type="scientific">Burkholderia cepacia</name>
    <name type="common">Pseudomonas cepacia</name>
    <dbReference type="NCBI Taxonomy" id="292"/>
    <lineage>
        <taxon>Bacteria</taxon>
        <taxon>Pseudomonadati</taxon>
        <taxon>Pseudomonadota</taxon>
        <taxon>Betaproteobacteria</taxon>
        <taxon>Burkholderiales</taxon>
        <taxon>Burkholderiaceae</taxon>
        <taxon>Burkholderia</taxon>
        <taxon>Burkholderia cepacia complex</taxon>
    </lineage>
</organism>